<proteinExistence type="inferred from homology"/>
<name>RNH2_ROSDO</name>
<organism>
    <name type="scientific">Roseobacter denitrificans (strain ATCC 33942 / OCh 114)</name>
    <name type="common">Erythrobacter sp. (strain OCh 114)</name>
    <name type="synonym">Roseobacter denitrificans</name>
    <dbReference type="NCBI Taxonomy" id="375451"/>
    <lineage>
        <taxon>Bacteria</taxon>
        <taxon>Pseudomonadati</taxon>
        <taxon>Pseudomonadota</taxon>
        <taxon>Alphaproteobacteria</taxon>
        <taxon>Rhodobacterales</taxon>
        <taxon>Roseobacteraceae</taxon>
        <taxon>Roseobacter</taxon>
    </lineage>
</organism>
<reference key="1">
    <citation type="journal article" date="2007" name="J. Bacteriol.">
        <title>The complete genome sequence of Roseobacter denitrificans reveals a mixotrophic rather than photosynthetic metabolism.</title>
        <authorList>
            <person name="Swingley W.D."/>
            <person name="Sadekar S."/>
            <person name="Mastrian S.D."/>
            <person name="Matthies H.J."/>
            <person name="Hao J."/>
            <person name="Ramos H."/>
            <person name="Acharya C.R."/>
            <person name="Conrad A.L."/>
            <person name="Taylor H.L."/>
            <person name="Dejesa L.C."/>
            <person name="Shah M.K."/>
            <person name="O'Huallachain M.E."/>
            <person name="Lince M.T."/>
            <person name="Blankenship R.E."/>
            <person name="Beatty J.T."/>
            <person name="Touchman J.W."/>
        </authorList>
    </citation>
    <scope>NUCLEOTIDE SEQUENCE [LARGE SCALE GENOMIC DNA]</scope>
    <source>
        <strain>ATCC 33942 / OCh 114</strain>
    </source>
</reference>
<gene>
    <name evidence="1" type="primary">rnhB</name>
    <name type="ordered locus">RD1_0300</name>
</gene>
<comment type="function">
    <text evidence="1">Endonuclease that specifically degrades the RNA of RNA-DNA hybrids.</text>
</comment>
<comment type="catalytic activity">
    <reaction evidence="1">
        <text>Endonucleolytic cleavage to 5'-phosphomonoester.</text>
        <dbReference type="EC" id="3.1.26.4"/>
    </reaction>
</comment>
<comment type="cofactor">
    <cofactor evidence="1">
        <name>Mn(2+)</name>
        <dbReference type="ChEBI" id="CHEBI:29035"/>
    </cofactor>
    <cofactor evidence="1">
        <name>Mg(2+)</name>
        <dbReference type="ChEBI" id="CHEBI:18420"/>
    </cofactor>
    <text evidence="1">Manganese or magnesium. Binds 1 divalent metal ion per monomer in the absence of substrate. May bind a second metal ion after substrate binding.</text>
</comment>
<comment type="subcellular location">
    <subcellularLocation>
        <location evidence="1">Cytoplasm</location>
    </subcellularLocation>
</comment>
<comment type="similarity">
    <text evidence="1">Belongs to the RNase HII family.</text>
</comment>
<keyword id="KW-0963">Cytoplasm</keyword>
<keyword id="KW-0255">Endonuclease</keyword>
<keyword id="KW-0378">Hydrolase</keyword>
<keyword id="KW-0464">Manganese</keyword>
<keyword id="KW-0479">Metal-binding</keyword>
<keyword id="KW-0540">Nuclease</keyword>
<keyword id="KW-1185">Reference proteome</keyword>
<accession>Q16DB9</accession>
<dbReference type="EC" id="3.1.26.4" evidence="1"/>
<dbReference type="EMBL" id="CP000362">
    <property type="protein sequence ID" value="ABG30024.1"/>
    <property type="molecule type" value="Genomic_DNA"/>
</dbReference>
<dbReference type="SMR" id="Q16DB9"/>
<dbReference type="STRING" id="375451.RD1_0300"/>
<dbReference type="KEGG" id="rde:RD1_0300"/>
<dbReference type="eggNOG" id="COG0164">
    <property type="taxonomic scope" value="Bacteria"/>
</dbReference>
<dbReference type="HOGENOM" id="CLU_036532_3_2_5"/>
<dbReference type="OrthoDB" id="9803420at2"/>
<dbReference type="Proteomes" id="UP000007029">
    <property type="component" value="Chromosome"/>
</dbReference>
<dbReference type="GO" id="GO:0005737">
    <property type="term" value="C:cytoplasm"/>
    <property type="evidence" value="ECO:0007669"/>
    <property type="project" value="UniProtKB-SubCell"/>
</dbReference>
<dbReference type="GO" id="GO:0032299">
    <property type="term" value="C:ribonuclease H2 complex"/>
    <property type="evidence" value="ECO:0007669"/>
    <property type="project" value="TreeGrafter"/>
</dbReference>
<dbReference type="GO" id="GO:0030145">
    <property type="term" value="F:manganese ion binding"/>
    <property type="evidence" value="ECO:0007669"/>
    <property type="project" value="UniProtKB-UniRule"/>
</dbReference>
<dbReference type="GO" id="GO:0003723">
    <property type="term" value="F:RNA binding"/>
    <property type="evidence" value="ECO:0007669"/>
    <property type="project" value="InterPro"/>
</dbReference>
<dbReference type="GO" id="GO:0004523">
    <property type="term" value="F:RNA-DNA hybrid ribonuclease activity"/>
    <property type="evidence" value="ECO:0007669"/>
    <property type="project" value="UniProtKB-UniRule"/>
</dbReference>
<dbReference type="GO" id="GO:0043137">
    <property type="term" value="P:DNA replication, removal of RNA primer"/>
    <property type="evidence" value="ECO:0007669"/>
    <property type="project" value="TreeGrafter"/>
</dbReference>
<dbReference type="GO" id="GO:0006298">
    <property type="term" value="P:mismatch repair"/>
    <property type="evidence" value="ECO:0007669"/>
    <property type="project" value="TreeGrafter"/>
</dbReference>
<dbReference type="CDD" id="cd07182">
    <property type="entry name" value="RNase_HII_bacteria_HII_like"/>
    <property type="match status" value="1"/>
</dbReference>
<dbReference type="Gene3D" id="3.30.420.10">
    <property type="entry name" value="Ribonuclease H-like superfamily/Ribonuclease H"/>
    <property type="match status" value="1"/>
</dbReference>
<dbReference type="HAMAP" id="MF_00052_B">
    <property type="entry name" value="RNase_HII_B"/>
    <property type="match status" value="1"/>
</dbReference>
<dbReference type="InterPro" id="IPR022898">
    <property type="entry name" value="RNase_HII"/>
</dbReference>
<dbReference type="InterPro" id="IPR001352">
    <property type="entry name" value="RNase_HII/HIII"/>
</dbReference>
<dbReference type="InterPro" id="IPR024567">
    <property type="entry name" value="RNase_HII/HIII_dom"/>
</dbReference>
<dbReference type="InterPro" id="IPR012337">
    <property type="entry name" value="RNaseH-like_sf"/>
</dbReference>
<dbReference type="InterPro" id="IPR036397">
    <property type="entry name" value="RNaseH_sf"/>
</dbReference>
<dbReference type="NCBIfam" id="NF000595">
    <property type="entry name" value="PRK00015.1-3"/>
    <property type="match status" value="1"/>
</dbReference>
<dbReference type="PANTHER" id="PTHR10954">
    <property type="entry name" value="RIBONUCLEASE H2 SUBUNIT A"/>
    <property type="match status" value="1"/>
</dbReference>
<dbReference type="PANTHER" id="PTHR10954:SF18">
    <property type="entry name" value="RIBONUCLEASE HII"/>
    <property type="match status" value="1"/>
</dbReference>
<dbReference type="Pfam" id="PF01351">
    <property type="entry name" value="RNase_HII"/>
    <property type="match status" value="1"/>
</dbReference>
<dbReference type="SUPFAM" id="SSF53098">
    <property type="entry name" value="Ribonuclease H-like"/>
    <property type="match status" value="1"/>
</dbReference>
<dbReference type="PROSITE" id="PS51975">
    <property type="entry name" value="RNASE_H_2"/>
    <property type="match status" value="1"/>
</dbReference>
<feature type="chain" id="PRO_0000334949" description="Ribonuclease HII">
    <location>
        <begin position="1"/>
        <end position="198"/>
    </location>
</feature>
<feature type="domain" description="RNase H type-2" evidence="2">
    <location>
        <begin position="6"/>
        <end position="195"/>
    </location>
</feature>
<feature type="binding site" evidence="1">
    <location>
        <position position="12"/>
    </location>
    <ligand>
        <name>a divalent metal cation</name>
        <dbReference type="ChEBI" id="CHEBI:60240"/>
    </ligand>
</feature>
<feature type="binding site" evidence="1">
    <location>
        <position position="13"/>
    </location>
    <ligand>
        <name>a divalent metal cation</name>
        <dbReference type="ChEBI" id="CHEBI:60240"/>
    </ligand>
</feature>
<feature type="binding site" evidence="1">
    <location>
        <position position="103"/>
    </location>
    <ligand>
        <name>a divalent metal cation</name>
        <dbReference type="ChEBI" id="CHEBI:60240"/>
    </ligand>
</feature>
<sequence length="198" mass="21279">MALGARRVAGVDEVGRGPLAGPVTAAAVVLDPANIPEGLNDSKQLSVKRRNLLGDALASSADISVGHASVEEIEQHNILRASHMAMLRALAGLRLRPDFVLIDGAMVPQGLNLRAQPVVKGDTRCLSISAASIIAKIARDKIMVDLAQQHPGYGWETNMGYGSKSHISALRNLGVTPHHRRTFKPVHHMLYQDKNVKP</sequence>
<evidence type="ECO:0000255" key="1">
    <source>
        <dbReference type="HAMAP-Rule" id="MF_00052"/>
    </source>
</evidence>
<evidence type="ECO:0000255" key="2">
    <source>
        <dbReference type="PROSITE-ProRule" id="PRU01319"/>
    </source>
</evidence>
<protein>
    <recommendedName>
        <fullName evidence="1">Ribonuclease HII</fullName>
        <shortName evidence="1">RNase HII</shortName>
        <ecNumber evidence="1">3.1.26.4</ecNumber>
    </recommendedName>
</protein>